<organism>
    <name type="scientific">Euglena deses</name>
    <dbReference type="NCBI Taxonomy" id="66845"/>
    <lineage>
        <taxon>Eukaryota</taxon>
        <taxon>Discoba</taxon>
        <taxon>Euglenozoa</taxon>
        <taxon>Euglenida</taxon>
        <taxon>Spirocuta</taxon>
        <taxon>Euglenophyceae</taxon>
        <taxon>Euglenales</taxon>
        <taxon>Euglenaceae</taxon>
        <taxon>Euglena</taxon>
    </lineage>
</organism>
<gene>
    <name evidence="1" type="primary">psb30</name>
    <name evidence="1" type="synonym">ycf12</name>
</gene>
<protein>
    <recommendedName>
        <fullName evidence="1">Photosystem II reaction center protein Psb30</fullName>
    </recommendedName>
    <alternativeName>
        <fullName evidence="1">Photosystem II reaction center protein Ycf12</fullName>
    </alternativeName>
</protein>
<reference key="1">
    <citation type="journal article" date="2001" name="Mol. Gen. Genet.">
        <title>Comparison of psbK operon organization and group III intron content in chloroplast genomes of 12 Euglenoid species.</title>
        <authorList>
            <person name="Doetsch N.A."/>
            <person name="Thompson M.D."/>
            <person name="Favreau M.R."/>
            <person name="Hallick R.B."/>
        </authorList>
    </citation>
    <scope>NUCLEOTIDE SEQUENCE [GENOMIC DNA]</scope>
    <source>
        <strain>UTEX LB 370</strain>
    </source>
</reference>
<feature type="chain" id="PRO_0000059020" description="Photosystem II reaction center protein Psb30">
    <location>
        <begin position="1"/>
        <end position="33"/>
    </location>
</feature>
<feature type="transmembrane region" description="Helical" evidence="1">
    <location>
        <begin position="5"/>
        <end position="25"/>
    </location>
</feature>
<comment type="function">
    <text evidence="1">A core subunit of photosystem II (PSII), probably helps stabilize the reaction center.</text>
</comment>
<comment type="subunit">
    <text evidence="2">PSII is composed of 1 copy each of membrane proteins PsbA, PsbB, PsbC, PsbD, PsbE, PsbF, PsbH, PsbI, PsbJ, PsbK, PsbL, PsbM, PsbT, PsbY, PsbZ, Psb30/Ycf12, peripheral proteins of the oxygen-evolving complex and a large number of cofactors. It forms dimeric complexes.</text>
</comment>
<comment type="subcellular location">
    <subcellularLocation>
        <location evidence="1">Plastid</location>
        <location evidence="1">Chloroplast thylakoid membrane</location>
        <topology evidence="1">Single-pass membrane protein</topology>
    </subcellularLocation>
</comment>
<comment type="similarity">
    <text evidence="1">Belongs to the Psb30/Ycf12 family.</text>
</comment>
<geneLocation type="chloroplast"/>
<evidence type="ECO:0000255" key="1">
    <source>
        <dbReference type="HAMAP-Rule" id="MF_01329"/>
    </source>
</evidence>
<evidence type="ECO:0000305" key="2"/>
<name>PSB30_EUGDE</name>
<sequence length="33" mass="3522">MNTELIVQLGSLTLITLAGPLVVVLLFLKQGNL</sequence>
<keyword id="KW-0150">Chloroplast</keyword>
<keyword id="KW-0472">Membrane</keyword>
<keyword id="KW-0602">Photosynthesis</keyword>
<keyword id="KW-0604">Photosystem II</keyword>
<keyword id="KW-0934">Plastid</keyword>
<keyword id="KW-0793">Thylakoid</keyword>
<keyword id="KW-0812">Transmembrane</keyword>
<keyword id="KW-1133">Transmembrane helix</keyword>
<proteinExistence type="inferred from homology"/>
<accession>Q9MS69</accession>
<dbReference type="EMBL" id="AF241279">
    <property type="protein sequence ID" value="AAF82449.1"/>
    <property type="molecule type" value="Genomic_DNA"/>
</dbReference>
<dbReference type="SMR" id="Q9MS69"/>
<dbReference type="GO" id="GO:0009535">
    <property type="term" value="C:chloroplast thylakoid membrane"/>
    <property type="evidence" value="ECO:0007669"/>
    <property type="project" value="UniProtKB-SubCell"/>
</dbReference>
<dbReference type="GO" id="GO:0009523">
    <property type="term" value="C:photosystem II"/>
    <property type="evidence" value="ECO:0007669"/>
    <property type="project" value="UniProtKB-KW"/>
</dbReference>
<dbReference type="GO" id="GO:0015979">
    <property type="term" value="P:photosynthesis"/>
    <property type="evidence" value="ECO:0007669"/>
    <property type="project" value="UniProtKB-KW"/>
</dbReference>
<dbReference type="HAMAP" id="MF_01329">
    <property type="entry name" value="PSII_Psb30_Ycf12"/>
    <property type="match status" value="1"/>
</dbReference>
<dbReference type="InterPro" id="IPR010284">
    <property type="entry name" value="PSII_Ycf12_core-subunit"/>
</dbReference>
<dbReference type="NCBIfam" id="NF010239">
    <property type="entry name" value="PRK13686.1"/>
    <property type="match status" value="1"/>
</dbReference>
<dbReference type="Pfam" id="PF05969">
    <property type="entry name" value="PSII_Ycf12"/>
    <property type="match status" value="1"/>
</dbReference>